<gene>
    <name evidence="1" type="primary">rplR</name>
    <name type="ordered locus">ZMO0532</name>
</gene>
<proteinExistence type="inferred from homology"/>
<protein>
    <recommendedName>
        <fullName evidence="1">Large ribosomal subunit protein uL18</fullName>
    </recommendedName>
    <alternativeName>
        <fullName evidence="2">50S ribosomal protein L18</fullName>
    </alternativeName>
</protein>
<keyword id="KW-1185">Reference proteome</keyword>
<keyword id="KW-0687">Ribonucleoprotein</keyword>
<keyword id="KW-0689">Ribosomal protein</keyword>
<keyword id="KW-0694">RNA-binding</keyword>
<keyword id="KW-0699">rRNA-binding</keyword>
<organism>
    <name type="scientific">Zymomonas mobilis subsp. mobilis (strain ATCC 31821 / ZM4 / CP4)</name>
    <dbReference type="NCBI Taxonomy" id="264203"/>
    <lineage>
        <taxon>Bacteria</taxon>
        <taxon>Pseudomonadati</taxon>
        <taxon>Pseudomonadota</taxon>
        <taxon>Alphaproteobacteria</taxon>
        <taxon>Sphingomonadales</taxon>
        <taxon>Zymomonadaceae</taxon>
        <taxon>Zymomonas</taxon>
    </lineage>
</organism>
<accession>Q5NQ49</accession>
<dbReference type="EMBL" id="AE008692">
    <property type="protein sequence ID" value="AAV89156.1"/>
    <property type="molecule type" value="Genomic_DNA"/>
</dbReference>
<dbReference type="RefSeq" id="WP_011240439.1">
    <property type="nucleotide sequence ID" value="NZ_CP035711.1"/>
</dbReference>
<dbReference type="SMR" id="Q5NQ49"/>
<dbReference type="STRING" id="264203.ZMO0532"/>
<dbReference type="GeneID" id="79904276"/>
<dbReference type="KEGG" id="zmo:ZMO0532"/>
<dbReference type="eggNOG" id="COG0256">
    <property type="taxonomic scope" value="Bacteria"/>
</dbReference>
<dbReference type="HOGENOM" id="CLU_098841_0_1_5"/>
<dbReference type="Proteomes" id="UP000001173">
    <property type="component" value="Chromosome"/>
</dbReference>
<dbReference type="GO" id="GO:0005737">
    <property type="term" value="C:cytoplasm"/>
    <property type="evidence" value="ECO:0007669"/>
    <property type="project" value="UniProtKB-ARBA"/>
</dbReference>
<dbReference type="GO" id="GO:1990904">
    <property type="term" value="C:ribonucleoprotein complex"/>
    <property type="evidence" value="ECO:0007669"/>
    <property type="project" value="UniProtKB-KW"/>
</dbReference>
<dbReference type="GO" id="GO:0005840">
    <property type="term" value="C:ribosome"/>
    <property type="evidence" value="ECO:0007669"/>
    <property type="project" value="UniProtKB-KW"/>
</dbReference>
<dbReference type="GO" id="GO:0008097">
    <property type="term" value="F:5S rRNA binding"/>
    <property type="evidence" value="ECO:0007669"/>
    <property type="project" value="TreeGrafter"/>
</dbReference>
<dbReference type="GO" id="GO:0003735">
    <property type="term" value="F:structural constituent of ribosome"/>
    <property type="evidence" value="ECO:0007669"/>
    <property type="project" value="InterPro"/>
</dbReference>
<dbReference type="GO" id="GO:0006412">
    <property type="term" value="P:translation"/>
    <property type="evidence" value="ECO:0007669"/>
    <property type="project" value="UniProtKB-UniRule"/>
</dbReference>
<dbReference type="CDD" id="cd00432">
    <property type="entry name" value="Ribosomal_L18_L5e"/>
    <property type="match status" value="1"/>
</dbReference>
<dbReference type="FunFam" id="3.30.420.100:FF:000001">
    <property type="entry name" value="50S ribosomal protein L18"/>
    <property type="match status" value="1"/>
</dbReference>
<dbReference type="Gene3D" id="3.30.420.100">
    <property type="match status" value="1"/>
</dbReference>
<dbReference type="HAMAP" id="MF_01337_B">
    <property type="entry name" value="Ribosomal_uL18_B"/>
    <property type="match status" value="1"/>
</dbReference>
<dbReference type="InterPro" id="IPR004389">
    <property type="entry name" value="Ribosomal_uL18_bac-type"/>
</dbReference>
<dbReference type="InterPro" id="IPR005484">
    <property type="entry name" value="Ribosomal_uL18_bac/euk"/>
</dbReference>
<dbReference type="NCBIfam" id="TIGR00060">
    <property type="entry name" value="L18_bact"/>
    <property type="match status" value="1"/>
</dbReference>
<dbReference type="PANTHER" id="PTHR12899">
    <property type="entry name" value="39S RIBOSOMAL PROTEIN L18, MITOCHONDRIAL"/>
    <property type="match status" value="1"/>
</dbReference>
<dbReference type="PANTHER" id="PTHR12899:SF3">
    <property type="entry name" value="LARGE RIBOSOMAL SUBUNIT PROTEIN UL18M"/>
    <property type="match status" value="1"/>
</dbReference>
<dbReference type="Pfam" id="PF00861">
    <property type="entry name" value="Ribosomal_L18p"/>
    <property type="match status" value="1"/>
</dbReference>
<dbReference type="SUPFAM" id="SSF53137">
    <property type="entry name" value="Translational machinery components"/>
    <property type="match status" value="1"/>
</dbReference>
<comment type="function">
    <text evidence="1">This is one of the proteins that bind and probably mediate the attachment of the 5S RNA into the large ribosomal subunit, where it forms part of the central protuberance.</text>
</comment>
<comment type="subunit">
    <text evidence="1">Part of the 50S ribosomal subunit; part of the 5S rRNA/L5/L18/L25 subcomplex. Contacts the 5S and 23S rRNAs.</text>
</comment>
<comment type="similarity">
    <text evidence="1">Belongs to the universal ribosomal protein uL18 family.</text>
</comment>
<name>RL18_ZYMMO</name>
<reference key="1">
    <citation type="journal article" date="2005" name="Nat. Biotechnol.">
        <title>The genome sequence of the ethanologenic bacterium Zymomonas mobilis ZM4.</title>
        <authorList>
            <person name="Seo J.-S."/>
            <person name="Chong H."/>
            <person name="Park H.S."/>
            <person name="Yoon K.-O."/>
            <person name="Jung C."/>
            <person name="Kim J.J."/>
            <person name="Hong J.H."/>
            <person name="Kim H."/>
            <person name="Kim J.-H."/>
            <person name="Kil J.-I."/>
            <person name="Park C.J."/>
            <person name="Oh H.-M."/>
            <person name="Lee J.-S."/>
            <person name="Jin S.-J."/>
            <person name="Um H.-W."/>
            <person name="Lee H.-J."/>
            <person name="Oh S.-J."/>
            <person name="Kim J.Y."/>
            <person name="Kang H.L."/>
            <person name="Lee S.Y."/>
            <person name="Lee K.J."/>
            <person name="Kang H.S."/>
        </authorList>
    </citation>
    <scope>NUCLEOTIDE SEQUENCE [LARGE SCALE GENOMIC DNA]</scope>
    <source>
        <strain>ATCC 31821 / ZM4 / CP4</strain>
    </source>
</reference>
<feature type="chain" id="PRO_0000131397" description="Large ribosomal subunit protein uL18">
    <location>
        <begin position="1"/>
        <end position="118"/>
    </location>
</feature>
<sequence>MAKGLSLFERRRQRVRTTLRAKGNHRPRLSVHRSGQHIYAQVIDDDQRRTVVAASTLEKAVRDKSGATVAAAAETGKRLAERASAAGITKVVFDRGGFLFHGRVKALADAAREGGLEF</sequence>
<evidence type="ECO:0000255" key="1">
    <source>
        <dbReference type="HAMAP-Rule" id="MF_01337"/>
    </source>
</evidence>
<evidence type="ECO:0000305" key="2"/>